<sequence>MTNLVRWLFSTNHKDIGTLYFIFGAIAGVMGTCFSVLIRMELARPGDQILGGNHQLYNVLITAHAFLMIFFMVMPAMIGGFGNWFVPILIGAPDMAFPRLNNISFWLLPPSLLLLLSSALVEVGSGTGWTVYPPLSGITSHSGGAVDLAIFSLHLSGVSSILGSINFITTIFNMRGPGMTMHRLPLFVWSVLVTAFLLLLSLPVLAGAITMLLTDRNFNTTFFDPAGGGDPILYQHLFWFFGHPEVYILILPGFGIISHIVSTFSRKPVFGYLGMVYAMISIGVLGFLVWAHHMFTVGLDVDTRAYFTAATMIIAVPTGIKIFSWIATMWGGSIQYKTPMLFAVGFIFLFTIGGLTGIVLANSGLDIALHDTYYVVAHFHYVLSMGAVFALFAGFYYWVGKIFGRTYPETLGQIHFWITFFGVNLTFFPMHFLGLSGMPRRIPDYPDAYAGWNALSSFGSYISVVGIRRFFVVVAITSSSGKNKRCAESPWAVEQNPTTLEWLVQSPPAFHTFGELPTIKETQGELQTRK</sequence>
<gene>
    <name type="primary">COX1</name>
    <name type="synonym">COXI</name>
</gene>
<feature type="chain" id="PRO_0000183419" description="Cytochrome c oxidase subunit 1">
    <location>
        <begin position="1"/>
        <end position="530"/>
    </location>
</feature>
<feature type="transmembrane region" description="Helical" evidence="3">
    <location>
        <begin position="18"/>
        <end position="38"/>
    </location>
</feature>
<feature type="transmembrane region" description="Helical" evidence="3">
    <location>
        <begin position="66"/>
        <end position="86"/>
    </location>
</feature>
<feature type="transmembrane region" description="Helical" evidence="3">
    <location>
        <begin position="103"/>
        <end position="123"/>
    </location>
</feature>
<feature type="transmembrane region" description="Helical" evidence="3">
    <location>
        <begin position="148"/>
        <end position="168"/>
    </location>
</feature>
<feature type="transmembrane region" description="Helical" evidence="3">
    <location>
        <begin position="186"/>
        <end position="206"/>
    </location>
</feature>
<feature type="transmembrane region" description="Helical" evidence="3">
    <location>
        <begin position="237"/>
        <end position="257"/>
    </location>
</feature>
<feature type="transmembrane region" description="Helical" evidence="3">
    <location>
        <begin position="269"/>
        <end position="289"/>
    </location>
</feature>
<feature type="transmembrane region" description="Helical" evidence="3">
    <location>
        <begin position="312"/>
        <end position="332"/>
    </location>
</feature>
<feature type="transmembrane region" description="Helical" evidence="3">
    <location>
        <begin position="340"/>
        <end position="360"/>
    </location>
</feature>
<feature type="transmembrane region" description="Helical" evidence="3">
    <location>
        <begin position="379"/>
        <end position="399"/>
    </location>
</feature>
<feature type="transmembrane region" description="Helical" evidence="3">
    <location>
        <begin position="414"/>
        <end position="434"/>
    </location>
</feature>
<feature type="transmembrane region" description="Helical" evidence="3">
    <location>
        <begin position="447"/>
        <end position="467"/>
    </location>
</feature>
<feature type="binding site" evidence="2">
    <location>
        <position position="41"/>
    </location>
    <ligand>
        <name>Ca(2+)</name>
        <dbReference type="ChEBI" id="CHEBI:29108"/>
    </ligand>
</feature>
<feature type="binding site" evidence="2">
    <location>
        <position position="46"/>
    </location>
    <ligand>
        <name>Ca(2+)</name>
        <dbReference type="ChEBI" id="CHEBI:29108"/>
    </ligand>
</feature>
<feature type="binding site" description="axial binding residue" evidence="2">
    <location>
        <position position="64"/>
    </location>
    <ligand>
        <name>Fe(II)-heme a</name>
        <dbReference type="ChEBI" id="CHEBI:61715"/>
        <note>low-spin</note>
    </ligand>
    <ligandPart>
        <name>Fe</name>
        <dbReference type="ChEBI" id="CHEBI:18248"/>
    </ligandPart>
</feature>
<feature type="binding site" evidence="2">
    <location>
        <position position="243"/>
    </location>
    <ligand>
        <name>Cu cation</name>
        <dbReference type="ChEBI" id="CHEBI:23378"/>
        <label>B</label>
    </ligand>
</feature>
<feature type="binding site" evidence="1">
    <location>
        <position position="247"/>
    </location>
    <ligand>
        <name>O2</name>
        <dbReference type="ChEBI" id="CHEBI:15379"/>
    </ligand>
</feature>
<feature type="binding site" evidence="2">
    <location>
        <position position="292"/>
    </location>
    <ligand>
        <name>Cu cation</name>
        <dbReference type="ChEBI" id="CHEBI:23378"/>
        <label>B</label>
    </ligand>
</feature>
<feature type="binding site" evidence="2">
    <location>
        <position position="293"/>
    </location>
    <ligand>
        <name>Cu cation</name>
        <dbReference type="ChEBI" id="CHEBI:23378"/>
        <label>B</label>
    </ligand>
</feature>
<feature type="binding site" evidence="2">
    <location>
        <position position="370"/>
    </location>
    <ligand>
        <name>Mg(2+)</name>
        <dbReference type="ChEBI" id="CHEBI:18420"/>
        <note>ligand shared with subunit 2</note>
    </ligand>
</feature>
<feature type="binding site" evidence="2">
    <location>
        <position position="371"/>
    </location>
    <ligand>
        <name>Mg(2+)</name>
        <dbReference type="ChEBI" id="CHEBI:18420"/>
        <note>ligand shared with subunit 2</note>
    </ligand>
</feature>
<feature type="binding site" description="axial binding residue" evidence="2">
    <location>
        <position position="378"/>
    </location>
    <ligand>
        <name>heme a3</name>
        <dbReference type="ChEBI" id="CHEBI:83282"/>
        <note>high-spin</note>
    </ligand>
    <ligandPart>
        <name>Fe</name>
        <dbReference type="ChEBI" id="CHEBI:18248"/>
    </ligandPart>
</feature>
<feature type="binding site" description="axial binding residue" evidence="2">
    <location>
        <position position="380"/>
    </location>
    <ligand>
        <name>Fe(II)-heme a</name>
        <dbReference type="ChEBI" id="CHEBI:61715"/>
        <note>low-spin</note>
    </ligand>
    <ligandPart>
        <name>Fe</name>
        <dbReference type="ChEBI" id="CHEBI:18248"/>
    </ligandPart>
</feature>
<feature type="binding site" evidence="2">
    <location>
        <position position="443"/>
    </location>
    <ligand>
        <name>Ca(2+)</name>
        <dbReference type="ChEBI" id="CHEBI:29108"/>
    </ligand>
</feature>
<feature type="cross-link" description="1'-histidyl-3'-tyrosine (His-Tyr)" evidence="2">
    <location>
        <begin position="243"/>
        <end position="247"/>
    </location>
</feature>
<comment type="function">
    <text evidence="2">Component of the cytochrome c oxidase, the last enzyme in the mitochondrial electron transport chain which drives oxidative phosphorylation. The respiratory chain contains 3 multisubunit complexes succinate dehydrogenase (complex II, CII), ubiquinol-cytochrome c oxidoreductase (cytochrome b-c1 complex, complex III, CIII) and cytochrome c oxidase (complex IV, CIV), that cooperate to transfer electrons derived from NADH and succinate to molecular oxygen, creating an electrochemical gradient over the inner membrane that drives transmembrane transport and the ATP synthase. Cytochrome c oxidase is the component of the respiratory chain that catalyzes the reduction of oxygen to water. Electrons originating from reduced cytochrome c in the intermembrane space (IMS) are transferred via the dinuclear copper A center (CU(A)) of subunit 2 and heme A of subunit 1 to the active site in subunit 1, a binuclear center (BNC) formed by heme A3 and copper B (CU(B)). The BNC reduces molecular oxygen to 2 water molecules using 4 electrons from cytochrome c in the IMS and 4 protons from the mitochondrial matrix.</text>
</comment>
<comment type="catalytic activity">
    <reaction evidence="2">
        <text>4 Fe(II)-[cytochrome c] + O2 + 8 H(+)(in) = 4 Fe(III)-[cytochrome c] + 2 H2O + 4 H(+)(out)</text>
        <dbReference type="Rhea" id="RHEA:11436"/>
        <dbReference type="Rhea" id="RHEA-COMP:10350"/>
        <dbReference type="Rhea" id="RHEA-COMP:14399"/>
        <dbReference type="ChEBI" id="CHEBI:15377"/>
        <dbReference type="ChEBI" id="CHEBI:15378"/>
        <dbReference type="ChEBI" id="CHEBI:15379"/>
        <dbReference type="ChEBI" id="CHEBI:29033"/>
        <dbReference type="ChEBI" id="CHEBI:29034"/>
        <dbReference type="EC" id="7.1.1.9"/>
    </reaction>
    <physiologicalReaction direction="left-to-right" evidence="2">
        <dbReference type="Rhea" id="RHEA:11437"/>
    </physiologicalReaction>
</comment>
<comment type="cofactor">
    <cofactor evidence="2">
        <name>heme</name>
        <dbReference type="ChEBI" id="CHEBI:30413"/>
    </cofactor>
    <text evidence="2">Binds 2 heme A groups non-covalently per subunit.</text>
</comment>
<comment type="cofactor">
    <cofactor evidence="2">
        <name>Cu cation</name>
        <dbReference type="ChEBI" id="CHEBI:23378"/>
    </cofactor>
    <text evidence="2">Binds a copper B center.</text>
</comment>
<comment type="pathway">
    <text evidence="2">Energy metabolism; oxidative phosphorylation.</text>
</comment>
<comment type="subunit">
    <text evidence="2">Component of the cytochrome c oxidase (complex IV, CIV), a multisubunit enzyme composed of a catalytic core of 3 subunits and several supernumerary subunits. The complex exists as a monomer or a dimer and forms supercomplexes (SCs) in the inner mitochondrial membrane with ubiquinol-cytochrome c oxidoreductase (cytochrome b-c1 complex, complex III, CIII).</text>
</comment>
<comment type="subcellular location">
    <subcellularLocation>
        <location evidence="2">Mitochondrion inner membrane</location>
        <topology evidence="2">Multi-pass membrane protein</topology>
    </subcellularLocation>
</comment>
<comment type="similarity">
    <text evidence="4">Belongs to the heme-copper respiratory oxidase family.</text>
</comment>
<reference key="1">
    <citation type="journal article" date="1986" name="Cell">
        <title>Mitochondrial genome rearrangement leads to extension and relocation of the cytochrome c oxidase subunit I gene in sorghum.</title>
        <authorList>
            <person name="Bailey-Serres J."/>
            <person name="Hanson D.K."/>
            <person name="Fox T.D."/>
            <person name="Leaver C.J."/>
        </authorList>
    </citation>
    <scope>NUCLEOTIDE SEQUENCE [GENOMIC DNA] OF 1-31</scope>
</reference>
<reference key="2">
    <citation type="submission" date="1987-05" db="EMBL/GenBank/DDBJ databases">
        <authorList>
            <person name="Hanson D.K."/>
            <person name="Bailey-Serres J."/>
            <person name="Leaver C.J."/>
        </authorList>
    </citation>
    <scope>NUCLEOTIDE SEQUENCE [GENOMIC DNA]</scope>
</reference>
<geneLocation type="mitochondrion"/>
<accession>P05502</accession>
<protein>
    <recommendedName>
        <fullName>Cytochrome c oxidase subunit 1</fullName>
        <ecNumber>7.1.1.9</ecNumber>
    </recommendedName>
    <alternativeName>
        <fullName>Cytochrome c oxidase polypeptide I</fullName>
    </alternativeName>
</protein>
<name>COX1_SORBI</name>
<organism>
    <name type="scientific">Sorghum bicolor</name>
    <name type="common">Sorghum</name>
    <name type="synonym">Sorghum vulgare</name>
    <dbReference type="NCBI Taxonomy" id="4558"/>
    <lineage>
        <taxon>Eukaryota</taxon>
        <taxon>Viridiplantae</taxon>
        <taxon>Streptophyta</taxon>
        <taxon>Embryophyta</taxon>
        <taxon>Tracheophyta</taxon>
        <taxon>Spermatophyta</taxon>
        <taxon>Magnoliopsida</taxon>
        <taxon>Liliopsida</taxon>
        <taxon>Poales</taxon>
        <taxon>Poaceae</taxon>
        <taxon>PACMAD clade</taxon>
        <taxon>Panicoideae</taxon>
        <taxon>Andropogonodae</taxon>
        <taxon>Andropogoneae</taxon>
        <taxon>Sorghinae</taxon>
        <taxon>Sorghum</taxon>
    </lineage>
</organism>
<proteinExistence type="inferred from homology"/>
<evidence type="ECO:0000250" key="1">
    <source>
        <dbReference type="UniProtKB" id="P00396"/>
    </source>
</evidence>
<evidence type="ECO:0000250" key="2">
    <source>
        <dbReference type="UniProtKB" id="P00401"/>
    </source>
</evidence>
<evidence type="ECO:0000255" key="3"/>
<evidence type="ECO:0000305" key="4"/>
<keyword id="KW-0106">Calcium</keyword>
<keyword id="KW-0186">Copper</keyword>
<keyword id="KW-0249">Electron transport</keyword>
<keyword id="KW-0349">Heme</keyword>
<keyword id="KW-0408">Iron</keyword>
<keyword id="KW-0460">Magnesium</keyword>
<keyword id="KW-0472">Membrane</keyword>
<keyword id="KW-0479">Metal-binding</keyword>
<keyword id="KW-0496">Mitochondrion</keyword>
<keyword id="KW-0999">Mitochondrion inner membrane</keyword>
<keyword id="KW-0679">Respiratory chain</keyword>
<keyword id="KW-1278">Translocase</keyword>
<keyword id="KW-0812">Transmembrane</keyword>
<keyword id="KW-1133">Transmembrane helix</keyword>
<keyword id="KW-0813">Transport</keyword>
<dbReference type="EC" id="7.1.1.9"/>
<dbReference type="EMBL" id="M14453">
    <property type="protein sequence ID" value="AAA68624.1"/>
    <property type="molecule type" value="Genomic_DNA"/>
</dbReference>
<dbReference type="RefSeq" id="YP_762344.1">
    <property type="nucleotide sequence ID" value="NC_008360.1"/>
</dbReference>
<dbReference type="SMR" id="P05502"/>
<dbReference type="GeneID" id="4306042"/>
<dbReference type="KEGG" id="sbi:4306042"/>
<dbReference type="OrthoDB" id="728657at2759"/>
<dbReference type="UniPathway" id="UPA00705"/>
<dbReference type="ExpressionAtlas" id="P05502">
    <property type="expression patterns" value="baseline"/>
</dbReference>
<dbReference type="GO" id="GO:0005743">
    <property type="term" value="C:mitochondrial inner membrane"/>
    <property type="evidence" value="ECO:0007669"/>
    <property type="project" value="UniProtKB-SubCell"/>
</dbReference>
<dbReference type="GO" id="GO:0045277">
    <property type="term" value="C:respiratory chain complex IV"/>
    <property type="evidence" value="ECO:0007669"/>
    <property type="project" value="InterPro"/>
</dbReference>
<dbReference type="GO" id="GO:0004129">
    <property type="term" value="F:cytochrome-c oxidase activity"/>
    <property type="evidence" value="ECO:0007669"/>
    <property type="project" value="UniProtKB-EC"/>
</dbReference>
<dbReference type="GO" id="GO:0020037">
    <property type="term" value="F:heme binding"/>
    <property type="evidence" value="ECO:0007669"/>
    <property type="project" value="InterPro"/>
</dbReference>
<dbReference type="GO" id="GO:0046872">
    <property type="term" value="F:metal ion binding"/>
    <property type="evidence" value="ECO:0007669"/>
    <property type="project" value="UniProtKB-KW"/>
</dbReference>
<dbReference type="GO" id="GO:0015990">
    <property type="term" value="P:electron transport coupled proton transport"/>
    <property type="evidence" value="ECO:0007669"/>
    <property type="project" value="InterPro"/>
</dbReference>
<dbReference type="GO" id="GO:0006119">
    <property type="term" value="P:oxidative phosphorylation"/>
    <property type="evidence" value="ECO:0007669"/>
    <property type="project" value="UniProtKB-UniPathway"/>
</dbReference>
<dbReference type="CDD" id="cd01663">
    <property type="entry name" value="Cyt_c_Oxidase_I"/>
    <property type="match status" value="1"/>
</dbReference>
<dbReference type="FunFam" id="1.20.210.10:FF:000001">
    <property type="entry name" value="Cytochrome c oxidase subunit 1"/>
    <property type="match status" value="1"/>
</dbReference>
<dbReference type="Gene3D" id="1.20.210.10">
    <property type="entry name" value="Cytochrome c oxidase-like, subunit I domain"/>
    <property type="match status" value="1"/>
</dbReference>
<dbReference type="InterPro" id="IPR023616">
    <property type="entry name" value="Cyt_c_oxase-like_su1_dom"/>
</dbReference>
<dbReference type="InterPro" id="IPR036927">
    <property type="entry name" value="Cyt_c_oxase-like_su1_sf"/>
</dbReference>
<dbReference type="InterPro" id="IPR000883">
    <property type="entry name" value="Cyt_C_Oxase_1"/>
</dbReference>
<dbReference type="InterPro" id="IPR023615">
    <property type="entry name" value="Cyt_c_Oxase_su1_BS"/>
</dbReference>
<dbReference type="InterPro" id="IPR033944">
    <property type="entry name" value="Cyt_c_oxase_su1_dom"/>
</dbReference>
<dbReference type="InterPro" id="IPR014241">
    <property type="entry name" value="Cyt_c_oxidase_su1_bac"/>
</dbReference>
<dbReference type="NCBIfam" id="TIGR02891">
    <property type="entry name" value="CtaD_CoxA"/>
    <property type="match status" value="1"/>
</dbReference>
<dbReference type="PANTHER" id="PTHR10422">
    <property type="entry name" value="CYTOCHROME C OXIDASE SUBUNIT 1"/>
    <property type="match status" value="1"/>
</dbReference>
<dbReference type="PANTHER" id="PTHR10422:SF18">
    <property type="entry name" value="CYTOCHROME C OXIDASE SUBUNIT 1"/>
    <property type="match status" value="1"/>
</dbReference>
<dbReference type="Pfam" id="PF00115">
    <property type="entry name" value="COX1"/>
    <property type="match status" value="1"/>
</dbReference>
<dbReference type="PRINTS" id="PR01165">
    <property type="entry name" value="CYCOXIDASEI"/>
</dbReference>
<dbReference type="SUPFAM" id="SSF81442">
    <property type="entry name" value="Cytochrome c oxidase subunit I-like"/>
    <property type="match status" value="1"/>
</dbReference>
<dbReference type="PROSITE" id="PS50855">
    <property type="entry name" value="COX1"/>
    <property type="match status" value="1"/>
</dbReference>
<dbReference type="PROSITE" id="PS00077">
    <property type="entry name" value="COX1_CUB"/>
    <property type="match status" value="1"/>
</dbReference>